<feature type="chain" id="PRO_0000229877" description="23S rRNA (uracil(1939)-C(5))-methyltransferase RlmD">
    <location>
        <begin position="1"/>
        <end position="461"/>
    </location>
</feature>
<feature type="domain" description="TRAM" evidence="1">
    <location>
        <begin position="20"/>
        <end position="78"/>
    </location>
</feature>
<feature type="region of interest" description="Disordered" evidence="2">
    <location>
        <begin position="1"/>
        <end position="26"/>
    </location>
</feature>
<feature type="active site" description="Nucleophile" evidence="1">
    <location>
        <position position="407"/>
    </location>
</feature>
<feature type="binding site" evidence="1">
    <location>
        <position position="91"/>
    </location>
    <ligand>
        <name>[4Fe-4S] cluster</name>
        <dbReference type="ChEBI" id="CHEBI:49883"/>
    </ligand>
</feature>
<feature type="binding site" evidence="1">
    <location>
        <position position="97"/>
    </location>
    <ligand>
        <name>[4Fe-4S] cluster</name>
        <dbReference type="ChEBI" id="CHEBI:49883"/>
    </ligand>
</feature>
<feature type="binding site" evidence="1">
    <location>
        <position position="100"/>
    </location>
    <ligand>
        <name>[4Fe-4S] cluster</name>
        <dbReference type="ChEBI" id="CHEBI:49883"/>
    </ligand>
</feature>
<feature type="binding site" evidence="1">
    <location>
        <position position="179"/>
    </location>
    <ligand>
        <name>[4Fe-4S] cluster</name>
        <dbReference type="ChEBI" id="CHEBI:49883"/>
    </ligand>
</feature>
<feature type="binding site" evidence="1">
    <location>
        <position position="283"/>
    </location>
    <ligand>
        <name>S-adenosyl-L-methionine</name>
        <dbReference type="ChEBI" id="CHEBI:59789"/>
    </ligand>
</feature>
<feature type="binding site" evidence="1">
    <location>
        <position position="312"/>
    </location>
    <ligand>
        <name>S-adenosyl-L-methionine</name>
        <dbReference type="ChEBI" id="CHEBI:59789"/>
    </ligand>
</feature>
<feature type="binding site" evidence="1">
    <location>
        <position position="317"/>
    </location>
    <ligand>
        <name>S-adenosyl-L-methionine</name>
        <dbReference type="ChEBI" id="CHEBI:59789"/>
    </ligand>
</feature>
<feature type="binding site" evidence="1">
    <location>
        <position position="333"/>
    </location>
    <ligand>
        <name>S-adenosyl-L-methionine</name>
        <dbReference type="ChEBI" id="CHEBI:59789"/>
    </ligand>
</feature>
<feature type="binding site" evidence="1">
    <location>
        <position position="360"/>
    </location>
    <ligand>
        <name>S-adenosyl-L-methionine</name>
        <dbReference type="ChEBI" id="CHEBI:59789"/>
    </ligand>
</feature>
<feature type="binding site" evidence="1">
    <location>
        <position position="381"/>
    </location>
    <ligand>
        <name>S-adenosyl-L-methionine</name>
        <dbReference type="ChEBI" id="CHEBI:59789"/>
    </ligand>
</feature>
<protein>
    <recommendedName>
        <fullName evidence="1">23S rRNA (uracil(1939)-C(5))-methyltransferase RlmD</fullName>
        <ecNumber evidence="1">2.1.1.190</ecNumber>
    </recommendedName>
    <alternativeName>
        <fullName evidence="1">23S rRNA(m5U1939)-methyltransferase</fullName>
    </alternativeName>
</protein>
<evidence type="ECO:0000255" key="1">
    <source>
        <dbReference type="HAMAP-Rule" id="MF_01010"/>
    </source>
</evidence>
<evidence type="ECO:0000256" key="2">
    <source>
        <dbReference type="SAM" id="MobiDB-lite"/>
    </source>
</evidence>
<accession>Q3K8E9</accession>
<dbReference type="EC" id="2.1.1.190" evidence="1"/>
<dbReference type="EMBL" id="CP000094">
    <property type="protein sequence ID" value="ABA75955.1"/>
    <property type="molecule type" value="Genomic_DNA"/>
</dbReference>
<dbReference type="RefSeq" id="WP_011335481.1">
    <property type="nucleotide sequence ID" value="NC_007492.2"/>
</dbReference>
<dbReference type="SMR" id="Q3K8E9"/>
<dbReference type="KEGG" id="pfo:Pfl01_4218"/>
<dbReference type="eggNOG" id="COG2265">
    <property type="taxonomic scope" value="Bacteria"/>
</dbReference>
<dbReference type="HOGENOM" id="CLU_014689_8_2_6"/>
<dbReference type="Proteomes" id="UP000002704">
    <property type="component" value="Chromosome"/>
</dbReference>
<dbReference type="GO" id="GO:0051539">
    <property type="term" value="F:4 iron, 4 sulfur cluster binding"/>
    <property type="evidence" value="ECO:0007669"/>
    <property type="project" value="UniProtKB-KW"/>
</dbReference>
<dbReference type="GO" id="GO:0005506">
    <property type="term" value="F:iron ion binding"/>
    <property type="evidence" value="ECO:0007669"/>
    <property type="project" value="UniProtKB-UniRule"/>
</dbReference>
<dbReference type="GO" id="GO:0003723">
    <property type="term" value="F:RNA binding"/>
    <property type="evidence" value="ECO:0007669"/>
    <property type="project" value="InterPro"/>
</dbReference>
<dbReference type="GO" id="GO:0070041">
    <property type="term" value="F:rRNA (uridine-C5-)-methyltransferase activity"/>
    <property type="evidence" value="ECO:0007669"/>
    <property type="project" value="UniProtKB-UniRule"/>
</dbReference>
<dbReference type="GO" id="GO:0070475">
    <property type="term" value="P:rRNA base methylation"/>
    <property type="evidence" value="ECO:0007669"/>
    <property type="project" value="TreeGrafter"/>
</dbReference>
<dbReference type="CDD" id="cd02440">
    <property type="entry name" value="AdoMet_MTases"/>
    <property type="match status" value="1"/>
</dbReference>
<dbReference type="FunFam" id="3.40.50.150:FF:000009">
    <property type="entry name" value="23S rRNA (Uracil(1939)-C(5))-methyltransferase RlmD"/>
    <property type="match status" value="1"/>
</dbReference>
<dbReference type="Gene3D" id="2.40.50.1070">
    <property type="match status" value="1"/>
</dbReference>
<dbReference type="Gene3D" id="2.40.50.140">
    <property type="entry name" value="Nucleic acid-binding proteins"/>
    <property type="match status" value="1"/>
</dbReference>
<dbReference type="Gene3D" id="3.40.50.150">
    <property type="entry name" value="Vaccinia Virus protein VP39"/>
    <property type="match status" value="1"/>
</dbReference>
<dbReference type="HAMAP" id="MF_01010">
    <property type="entry name" value="23SrRNA_methyltr_RlmD"/>
    <property type="match status" value="1"/>
</dbReference>
<dbReference type="InterPro" id="IPR001566">
    <property type="entry name" value="23S_rRNA_MeTrfase_RlmD"/>
</dbReference>
<dbReference type="InterPro" id="IPR030390">
    <property type="entry name" value="MeTrfase_TrmA_AS"/>
</dbReference>
<dbReference type="InterPro" id="IPR030391">
    <property type="entry name" value="MeTrfase_TrmA_CS"/>
</dbReference>
<dbReference type="InterPro" id="IPR012340">
    <property type="entry name" value="NA-bd_OB-fold"/>
</dbReference>
<dbReference type="InterPro" id="IPR029063">
    <property type="entry name" value="SAM-dependent_MTases_sf"/>
</dbReference>
<dbReference type="InterPro" id="IPR002792">
    <property type="entry name" value="TRAM_dom"/>
</dbReference>
<dbReference type="InterPro" id="IPR010280">
    <property type="entry name" value="U5_MeTrfase_fam"/>
</dbReference>
<dbReference type="NCBIfam" id="NF009639">
    <property type="entry name" value="PRK13168.1"/>
    <property type="match status" value="1"/>
</dbReference>
<dbReference type="NCBIfam" id="TIGR00479">
    <property type="entry name" value="rumA"/>
    <property type="match status" value="1"/>
</dbReference>
<dbReference type="PANTHER" id="PTHR11061:SF49">
    <property type="entry name" value="23S RRNA (URACIL(1939)-C(5))-METHYLTRANSFERASE RLMD"/>
    <property type="match status" value="1"/>
</dbReference>
<dbReference type="PANTHER" id="PTHR11061">
    <property type="entry name" value="RNA M5U METHYLTRANSFERASE"/>
    <property type="match status" value="1"/>
</dbReference>
<dbReference type="Pfam" id="PF01938">
    <property type="entry name" value="TRAM"/>
    <property type="match status" value="1"/>
</dbReference>
<dbReference type="Pfam" id="PF05958">
    <property type="entry name" value="tRNA_U5-meth_tr"/>
    <property type="match status" value="1"/>
</dbReference>
<dbReference type="SUPFAM" id="SSF50249">
    <property type="entry name" value="Nucleic acid-binding proteins"/>
    <property type="match status" value="1"/>
</dbReference>
<dbReference type="SUPFAM" id="SSF53335">
    <property type="entry name" value="S-adenosyl-L-methionine-dependent methyltransferases"/>
    <property type="match status" value="1"/>
</dbReference>
<dbReference type="PROSITE" id="PS51687">
    <property type="entry name" value="SAM_MT_RNA_M5U"/>
    <property type="match status" value="1"/>
</dbReference>
<dbReference type="PROSITE" id="PS50926">
    <property type="entry name" value="TRAM"/>
    <property type="match status" value="1"/>
</dbReference>
<dbReference type="PROSITE" id="PS01230">
    <property type="entry name" value="TRMA_1"/>
    <property type="match status" value="1"/>
</dbReference>
<dbReference type="PROSITE" id="PS01231">
    <property type="entry name" value="TRMA_2"/>
    <property type="match status" value="1"/>
</dbReference>
<reference key="1">
    <citation type="journal article" date="2009" name="Genome Biol.">
        <title>Genomic and genetic analyses of diversity and plant interactions of Pseudomonas fluorescens.</title>
        <authorList>
            <person name="Silby M.W."/>
            <person name="Cerdeno-Tarraga A.M."/>
            <person name="Vernikos G.S."/>
            <person name="Giddens S.R."/>
            <person name="Jackson R.W."/>
            <person name="Preston G.M."/>
            <person name="Zhang X.-X."/>
            <person name="Moon C.D."/>
            <person name="Gehrig S.M."/>
            <person name="Godfrey S.A.C."/>
            <person name="Knight C.G."/>
            <person name="Malone J.G."/>
            <person name="Robinson Z."/>
            <person name="Spiers A.J."/>
            <person name="Harris S."/>
            <person name="Challis G.L."/>
            <person name="Yaxley A.M."/>
            <person name="Harris D."/>
            <person name="Seeger K."/>
            <person name="Murphy L."/>
            <person name="Rutter S."/>
            <person name="Squares R."/>
            <person name="Quail M.A."/>
            <person name="Saunders E."/>
            <person name="Mavromatis K."/>
            <person name="Brettin T.S."/>
            <person name="Bentley S.D."/>
            <person name="Hothersall J."/>
            <person name="Stephens E."/>
            <person name="Thomas C.M."/>
            <person name="Parkhill J."/>
            <person name="Levy S.B."/>
            <person name="Rainey P.B."/>
            <person name="Thomson N.R."/>
        </authorList>
    </citation>
    <scope>NUCLEOTIDE SEQUENCE [LARGE SCALE GENOMIC DNA]</scope>
    <source>
        <strain>Pf0-1</strain>
    </source>
</reference>
<gene>
    <name evidence="1" type="primary">rlmD</name>
    <name type="synonym">rumA</name>
    <name type="ordered locus">Pfl01_4218</name>
</gene>
<keyword id="KW-0004">4Fe-4S</keyword>
<keyword id="KW-0408">Iron</keyword>
<keyword id="KW-0411">Iron-sulfur</keyword>
<keyword id="KW-0479">Metal-binding</keyword>
<keyword id="KW-0489">Methyltransferase</keyword>
<keyword id="KW-0698">rRNA processing</keyword>
<keyword id="KW-0949">S-adenosyl-L-methionine</keyword>
<keyword id="KW-0808">Transferase</keyword>
<organism>
    <name type="scientific">Pseudomonas fluorescens (strain Pf0-1)</name>
    <dbReference type="NCBI Taxonomy" id="205922"/>
    <lineage>
        <taxon>Bacteria</taxon>
        <taxon>Pseudomonadati</taxon>
        <taxon>Pseudomonadota</taxon>
        <taxon>Gammaproteobacteria</taxon>
        <taxon>Pseudomonadales</taxon>
        <taxon>Pseudomonadaceae</taxon>
        <taxon>Pseudomonas</taxon>
    </lineage>
</organism>
<name>RLMD_PSEPF</name>
<proteinExistence type="inferred from homology"/>
<sequence length="461" mass="50407">MAKHERGLRFQPTGGSKAPQIPTGKKQRLSIERLANDGRGIAFFEGKTWFVLGALAGEEVEARVLGAHGKVVEARTERVFSASELRRPAPCQHAGRCGGCSVQHLPHNEQLALKQRMLAEQLSRVAGAEPEEWAAPLTGPEFGYRRRARIAVRWDSKAKKLEVGFRAAGSQDIVAISECPVLVQPLQPIMTRLPEMLRRLSKPQALGHVELFSGSSLAVLLRHMAPLSEADLTILKDFCAFHEAQLWLHGEGEPQPVDDAQSLGYHLEQWDLQLAYRPGDFIQVNAGVNEAMVAQALEWLKPTADERVLDLFCGLGNFALPLAKAAREVVAVEGVQTMVDRAAANAASNNLHNTKFFQADLSQPLTDAEWIGNGFSAVLLDPPRDGAFEVVRKLAALGAKRLVYVSCNPATLARDTVELIKQGYRLKRAGILDMFPQTAHVEAMALFEASQDGSSDPTGRP</sequence>
<comment type="function">
    <text evidence="1">Catalyzes the formation of 5-methyl-uridine at position 1939 (m5U1939) in 23S rRNA.</text>
</comment>
<comment type="catalytic activity">
    <reaction evidence="1">
        <text>uridine(1939) in 23S rRNA + S-adenosyl-L-methionine = 5-methyluridine(1939) in 23S rRNA + S-adenosyl-L-homocysteine + H(+)</text>
        <dbReference type="Rhea" id="RHEA:42908"/>
        <dbReference type="Rhea" id="RHEA-COMP:10278"/>
        <dbReference type="Rhea" id="RHEA-COMP:10279"/>
        <dbReference type="ChEBI" id="CHEBI:15378"/>
        <dbReference type="ChEBI" id="CHEBI:57856"/>
        <dbReference type="ChEBI" id="CHEBI:59789"/>
        <dbReference type="ChEBI" id="CHEBI:65315"/>
        <dbReference type="ChEBI" id="CHEBI:74447"/>
        <dbReference type="EC" id="2.1.1.190"/>
    </reaction>
</comment>
<comment type="similarity">
    <text evidence="1">Belongs to the class I-like SAM-binding methyltransferase superfamily. RNA M5U methyltransferase family. RlmD subfamily.</text>
</comment>